<gene>
    <name evidence="1" type="primary">glmU</name>
    <name type="ordered locus">RHA1_ro05724</name>
</gene>
<protein>
    <recommendedName>
        <fullName evidence="1">Bifunctional protein GlmU</fullName>
    </recommendedName>
    <domain>
        <recommendedName>
            <fullName evidence="1">UDP-N-acetylglucosamine pyrophosphorylase</fullName>
            <ecNumber evidence="1">2.7.7.23</ecNumber>
        </recommendedName>
        <alternativeName>
            <fullName evidence="1">N-acetylglucosamine-1-phosphate uridyltransferase</fullName>
        </alternativeName>
    </domain>
    <domain>
        <recommendedName>
            <fullName evidence="1">Glucosamine-1-phosphate N-acetyltransferase</fullName>
            <ecNumber evidence="1">2.3.1.157</ecNumber>
        </recommendedName>
    </domain>
</protein>
<accession>Q0S4N3</accession>
<dbReference type="EC" id="2.7.7.23" evidence="1"/>
<dbReference type="EC" id="2.3.1.157" evidence="1"/>
<dbReference type="EMBL" id="CP000431">
    <property type="protein sequence ID" value="ABG97503.1"/>
    <property type="molecule type" value="Genomic_DNA"/>
</dbReference>
<dbReference type="RefSeq" id="WP_011597849.1">
    <property type="nucleotide sequence ID" value="NC_008268.1"/>
</dbReference>
<dbReference type="SMR" id="Q0S4N3"/>
<dbReference type="KEGG" id="rha:RHA1_ro05724"/>
<dbReference type="PATRIC" id="fig|101510.16.peg.5768"/>
<dbReference type="eggNOG" id="COG1207">
    <property type="taxonomic scope" value="Bacteria"/>
</dbReference>
<dbReference type="HOGENOM" id="CLU_029499_15_2_11"/>
<dbReference type="OrthoDB" id="9775031at2"/>
<dbReference type="UniPathway" id="UPA00113">
    <property type="reaction ID" value="UER00532"/>
</dbReference>
<dbReference type="UniPathway" id="UPA00113">
    <property type="reaction ID" value="UER00533"/>
</dbReference>
<dbReference type="UniPathway" id="UPA00973"/>
<dbReference type="Proteomes" id="UP000008710">
    <property type="component" value="Chromosome"/>
</dbReference>
<dbReference type="GO" id="GO:0005737">
    <property type="term" value="C:cytoplasm"/>
    <property type="evidence" value="ECO:0007669"/>
    <property type="project" value="UniProtKB-SubCell"/>
</dbReference>
<dbReference type="GO" id="GO:0016020">
    <property type="term" value="C:membrane"/>
    <property type="evidence" value="ECO:0007669"/>
    <property type="project" value="GOC"/>
</dbReference>
<dbReference type="GO" id="GO:0019134">
    <property type="term" value="F:glucosamine-1-phosphate N-acetyltransferase activity"/>
    <property type="evidence" value="ECO:0007669"/>
    <property type="project" value="UniProtKB-UniRule"/>
</dbReference>
<dbReference type="GO" id="GO:0000287">
    <property type="term" value="F:magnesium ion binding"/>
    <property type="evidence" value="ECO:0007669"/>
    <property type="project" value="UniProtKB-UniRule"/>
</dbReference>
<dbReference type="GO" id="GO:0003977">
    <property type="term" value="F:UDP-N-acetylglucosamine diphosphorylase activity"/>
    <property type="evidence" value="ECO:0007669"/>
    <property type="project" value="UniProtKB-UniRule"/>
</dbReference>
<dbReference type="GO" id="GO:0000902">
    <property type="term" value="P:cell morphogenesis"/>
    <property type="evidence" value="ECO:0007669"/>
    <property type="project" value="UniProtKB-UniRule"/>
</dbReference>
<dbReference type="GO" id="GO:0071555">
    <property type="term" value="P:cell wall organization"/>
    <property type="evidence" value="ECO:0007669"/>
    <property type="project" value="UniProtKB-KW"/>
</dbReference>
<dbReference type="GO" id="GO:0009245">
    <property type="term" value="P:lipid A biosynthetic process"/>
    <property type="evidence" value="ECO:0007669"/>
    <property type="project" value="UniProtKB-UniRule"/>
</dbReference>
<dbReference type="GO" id="GO:0009252">
    <property type="term" value="P:peptidoglycan biosynthetic process"/>
    <property type="evidence" value="ECO:0007669"/>
    <property type="project" value="UniProtKB-UniRule"/>
</dbReference>
<dbReference type="GO" id="GO:0008360">
    <property type="term" value="P:regulation of cell shape"/>
    <property type="evidence" value="ECO:0007669"/>
    <property type="project" value="UniProtKB-KW"/>
</dbReference>
<dbReference type="GO" id="GO:0006048">
    <property type="term" value="P:UDP-N-acetylglucosamine biosynthetic process"/>
    <property type="evidence" value="ECO:0007669"/>
    <property type="project" value="UniProtKB-UniPathway"/>
</dbReference>
<dbReference type="CDD" id="cd02540">
    <property type="entry name" value="GT2_GlmU_N_bac"/>
    <property type="match status" value="1"/>
</dbReference>
<dbReference type="CDD" id="cd03353">
    <property type="entry name" value="LbH_GlmU_C"/>
    <property type="match status" value="1"/>
</dbReference>
<dbReference type="Gene3D" id="2.160.10.10">
    <property type="entry name" value="Hexapeptide repeat proteins"/>
    <property type="match status" value="1"/>
</dbReference>
<dbReference type="Gene3D" id="3.90.550.10">
    <property type="entry name" value="Spore Coat Polysaccharide Biosynthesis Protein SpsA, Chain A"/>
    <property type="match status" value="1"/>
</dbReference>
<dbReference type="HAMAP" id="MF_01631">
    <property type="entry name" value="GlmU"/>
    <property type="match status" value="1"/>
</dbReference>
<dbReference type="InterPro" id="IPR005882">
    <property type="entry name" value="Bifunctional_GlmU"/>
</dbReference>
<dbReference type="InterPro" id="IPR050065">
    <property type="entry name" value="GlmU-like"/>
</dbReference>
<dbReference type="InterPro" id="IPR038009">
    <property type="entry name" value="GlmU_C_LbH"/>
</dbReference>
<dbReference type="InterPro" id="IPR025877">
    <property type="entry name" value="MobA-like_NTP_Trfase"/>
</dbReference>
<dbReference type="InterPro" id="IPR029044">
    <property type="entry name" value="Nucleotide-diphossugar_trans"/>
</dbReference>
<dbReference type="InterPro" id="IPR011004">
    <property type="entry name" value="Trimer_LpxA-like_sf"/>
</dbReference>
<dbReference type="NCBIfam" id="TIGR01173">
    <property type="entry name" value="glmU"/>
    <property type="match status" value="1"/>
</dbReference>
<dbReference type="NCBIfam" id="NF010932">
    <property type="entry name" value="PRK14352.1"/>
    <property type="match status" value="1"/>
</dbReference>
<dbReference type="PANTHER" id="PTHR43584:SF3">
    <property type="entry name" value="BIFUNCTIONAL PROTEIN GLMU"/>
    <property type="match status" value="1"/>
</dbReference>
<dbReference type="PANTHER" id="PTHR43584">
    <property type="entry name" value="NUCLEOTIDYL TRANSFERASE"/>
    <property type="match status" value="1"/>
</dbReference>
<dbReference type="Pfam" id="PF12804">
    <property type="entry name" value="NTP_transf_3"/>
    <property type="match status" value="1"/>
</dbReference>
<dbReference type="SUPFAM" id="SSF53448">
    <property type="entry name" value="Nucleotide-diphospho-sugar transferases"/>
    <property type="match status" value="1"/>
</dbReference>
<dbReference type="SUPFAM" id="SSF51161">
    <property type="entry name" value="Trimeric LpxA-like enzymes"/>
    <property type="match status" value="1"/>
</dbReference>
<comment type="function">
    <text evidence="1">Catalyzes the last two sequential reactions in the de novo biosynthetic pathway for UDP-N-acetylglucosamine (UDP-GlcNAc). The C-terminal domain catalyzes the transfer of acetyl group from acetyl coenzyme A to glucosamine-1-phosphate (GlcN-1-P) to produce N-acetylglucosamine-1-phosphate (GlcNAc-1-P), which is converted into UDP-GlcNAc by the transfer of uridine 5-monophosphate (from uridine 5-triphosphate), a reaction catalyzed by the N-terminal domain.</text>
</comment>
<comment type="catalytic activity">
    <reaction evidence="1">
        <text>alpha-D-glucosamine 1-phosphate + acetyl-CoA = N-acetyl-alpha-D-glucosamine 1-phosphate + CoA + H(+)</text>
        <dbReference type="Rhea" id="RHEA:13725"/>
        <dbReference type="ChEBI" id="CHEBI:15378"/>
        <dbReference type="ChEBI" id="CHEBI:57287"/>
        <dbReference type="ChEBI" id="CHEBI:57288"/>
        <dbReference type="ChEBI" id="CHEBI:57776"/>
        <dbReference type="ChEBI" id="CHEBI:58516"/>
        <dbReference type="EC" id="2.3.1.157"/>
    </reaction>
</comment>
<comment type="catalytic activity">
    <reaction evidence="1">
        <text>N-acetyl-alpha-D-glucosamine 1-phosphate + UTP + H(+) = UDP-N-acetyl-alpha-D-glucosamine + diphosphate</text>
        <dbReference type="Rhea" id="RHEA:13509"/>
        <dbReference type="ChEBI" id="CHEBI:15378"/>
        <dbReference type="ChEBI" id="CHEBI:33019"/>
        <dbReference type="ChEBI" id="CHEBI:46398"/>
        <dbReference type="ChEBI" id="CHEBI:57705"/>
        <dbReference type="ChEBI" id="CHEBI:57776"/>
        <dbReference type="EC" id="2.7.7.23"/>
    </reaction>
</comment>
<comment type="cofactor">
    <cofactor evidence="1">
        <name>Mg(2+)</name>
        <dbReference type="ChEBI" id="CHEBI:18420"/>
    </cofactor>
    <text evidence="1">Binds 1 Mg(2+) ion per subunit.</text>
</comment>
<comment type="pathway">
    <text evidence="1">Nucleotide-sugar biosynthesis; UDP-N-acetyl-alpha-D-glucosamine biosynthesis; N-acetyl-alpha-D-glucosamine 1-phosphate from alpha-D-glucosamine 6-phosphate (route II): step 2/2.</text>
</comment>
<comment type="pathway">
    <text evidence="1">Nucleotide-sugar biosynthesis; UDP-N-acetyl-alpha-D-glucosamine biosynthesis; UDP-N-acetyl-alpha-D-glucosamine from N-acetyl-alpha-D-glucosamine 1-phosphate: step 1/1.</text>
</comment>
<comment type="pathway">
    <text evidence="1">Bacterial outer membrane biogenesis; LPS lipid A biosynthesis.</text>
</comment>
<comment type="subunit">
    <text evidence="1">Homotrimer.</text>
</comment>
<comment type="subcellular location">
    <subcellularLocation>
        <location evidence="1">Cytoplasm</location>
    </subcellularLocation>
</comment>
<comment type="similarity">
    <text evidence="1">In the N-terminal section; belongs to the N-acetylglucosamine-1-phosphate uridyltransferase family.</text>
</comment>
<comment type="similarity">
    <text evidence="1">In the C-terminal section; belongs to the transferase hexapeptide repeat family.</text>
</comment>
<proteinExistence type="inferred from homology"/>
<evidence type="ECO:0000255" key="1">
    <source>
        <dbReference type="HAMAP-Rule" id="MF_01631"/>
    </source>
</evidence>
<evidence type="ECO:0000256" key="2">
    <source>
        <dbReference type="SAM" id="MobiDB-lite"/>
    </source>
</evidence>
<feature type="chain" id="PRO_0000263149" description="Bifunctional protein GlmU">
    <location>
        <begin position="1"/>
        <end position="500"/>
    </location>
</feature>
<feature type="region of interest" description="Pyrophosphorylase" evidence="1">
    <location>
        <begin position="1"/>
        <end position="242"/>
    </location>
</feature>
<feature type="region of interest" description="Linker" evidence="1">
    <location>
        <begin position="243"/>
        <end position="263"/>
    </location>
</feature>
<feature type="region of interest" description="N-acetyltransferase" evidence="1">
    <location>
        <begin position="264"/>
        <end position="500"/>
    </location>
</feature>
<feature type="region of interest" description="Disordered" evidence="2">
    <location>
        <begin position="472"/>
        <end position="500"/>
    </location>
</feature>
<feature type="compositionally biased region" description="Basic and acidic residues" evidence="2">
    <location>
        <begin position="482"/>
        <end position="500"/>
    </location>
</feature>
<feature type="active site" description="Proton acceptor" evidence="1">
    <location>
        <position position="375"/>
    </location>
</feature>
<feature type="binding site" evidence="1">
    <location>
        <begin position="10"/>
        <end position="13"/>
    </location>
    <ligand>
        <name>UDP-N-acetyl-alpha-D-glucosamine</name>
        <dbReference type="ChEBI" id="CHEBI:57705"/>
    </ligand>
</feature>
<feature type="binding site" evidence="1">
    <location>
        <position position="24"/>
    </location>
    <ligand>
        <name>UDP-N-acetyl-alpha-D-glucosamine</name>
        <dbReference type="ChEBI" id="CHEBI:57705"/>
    </ligand>
</feature>
<feature type="binding site" evidence="1">
    <location>
        <position position="81"/>
    </location>
    <ligand>
        <name>UDP-N-acetyl-alpha-D-glucosamine</name>
        <dbReference type="ChEBI" id="CHEBI:57705"/>
    </ligand>
</feature>
<feature type="binding site" evidence="1">
    <location>
        <begin position="86"/>
        <end position="87"/>
    </location>
    <ligand>
        <name>UDP-N-acetyl-alpha-D-glucosamine</name>
        <dbReference type="ChEBI" id="CHEBI:57705"/>
    </ligand>
</feature>
<feature type="binding site" evidence="1">
    <location>
        <position position="112"/>
    </location>
    <ligand>
        <name>Mg(2+)</name>
        <dbReference type="ChEBI" id="CHEBI:18420"/>
    </ligand>
</feature>
<feature type="binding site" evidence="1">
    <location>
        <position position="151"/>
    </location>
    <ligand>
        <name>UDP-N-acetyl-alpha-D-glucosamine</name>
        <dbReference type="ChEBI" id="CHEBI:57705"/>
    </ligand>
</feature>
<feature type="binding site" evidence="1">
    <location>
        <position position="167"/>
    </location>
    <ligand>
        <name>UDP-N-acetyl-alpha-D-glucosamine</name>
        <dbReference type="ChEBI" id="CHEBI:57705"/>
    </ligand>
</feature>
<feature type="binding site" evidence="1">
    <location>
        <position position="182"/>
    </location>
    <ligand>
        <name>UDP-N-acetyl-alpha-D-glucosamine</name>
        <dbReference type="ChEBI" id="CHEBI:57705"/>
    </ligand>
</feature>
<feature type="binding site" evidence="1">
    <location>
        <position position="240"/>
    </location>
    <ligand>
        <name>Mg(2+)</name>
        <dbReference type="ChEBI" id="CHEBI:18420"/>
    </ligand>
</feature>
<feature type="binding site" evidence="1">
    <location>
        <position position="240"/>
    </location>
    <ligand>
        <name>UDP-N-acetyl-alpha-D-glucosamine</name>
        <dbReference type="ChEBI" id="CHEBI:57705"/>
    </ligand>
</feature>
<feature type="binding site" evidence="1">
    <location>
        <position position="345"/>
    </location>
    <ligand>
        <name>UDP-N-acetyl-alpha-D-glucosamine</name>
        <dbReference type="ChEBI" id="CHEBI:57705"/>
    </ligand>
</feature>
<feature type="binding site" evidence="1">
    <location>
        <position position="363"/>
    </location>
    <ligand>
        <name>UDP-N-acetyl-alpha-D-glucosamine</name>
        <dbReference type="ChEBI" id="CHEBI:57705"/>
    </ligand>
</feature>
<feature type="binding site" evidence="1">
    <location>
        <position position="378"/>
    </location>
    <ligand>
        <name>UDP-N-acetyl-alpha-D-glucosamine</name>
        <dbReference type="ChEBI" id="CHEBI:57705"/>
    </ligand>
</feature>
<feature type="binding site" evidence="1">
    <location>
        <position position="389"/>
    </location>
    <ligand>
        <name>UDP-N-acetyl-alpha-D-glucosamine</name>
        <dbReference type="ChEBI" id="CHEBI:57705"/>
    </ligand>
</feature>
<feature type="binding site" evidence="1">
    <location>
        <position position="392"/>
    </location>
    <ligand>
        <name>acetyl-CoA</name>
        <dbReference type="ChEBI" id="CHEBI:57288"/>
    </ligand>
</feature>
<feature type="binding site" evidence="1">
    <location>
        <begin position="398"/>
        <end position="399"/>
    </location>
    <ligand>
        <name>acetyl-CoA</name>
        <dbReference type="ChEBI" id="CHEBI:57288"/>
    </ligand>
</feature>
<feature type="binding site" evidence="1">
    <location>
        <position position="417"/>
    </location>
    <ligand>
        <name>acetyl-CoA</name>
        <dbReference type="ChEBI" id="CHEBI:57288"/>
    </ligand>
</feature>
<feature type="binding site" evidence="1">
    <location>
        <position position="435"/>
    </location>
    <ligand>
        <name>acetyl-CoA</name>
        <dbReference type="ChEBI" id="CHEBI:57288"/>
    </ligand>
</feature>
<organism>
    <name type="scientific">Rhodococcus jostii (strain RHA1)</name>
    <dbReference type="NCBI Taxonomy" id="101510"/>
    <lineage>
        <taxon>Bacteria</taxon>
        <taxon>Bacillati</taxon>
        <taxon>Actinomycetota</taxon>
        <taxon>Actinomycetes</taxon>
        <taxon>Mycobacteriales</taxon>
        <taxon>Nocardiaceae</taxon>
        <taxon>Rhodococcus</taxon>
    </lineage>
</organism>
<name>GLMU_RHOJR</name>
<reference key="1">
    <citation type="journal article" date="2006" name="Proc. Natl. Acad. Sci. U.S.A.">
        <title>The complete genome of Rhodococcus sp. RHA1 provides insights into a catabolic powerhouse.</title>
        <authorList>
            <person name="McLeod M.P."/>
            <person name="Warren R.L."/>
            <person name="Hsiao W.W.L."/>
            <person name="Araki N."/>
            <person name="Myhre M."/>
            <person name="Fernandes C."/>
            <person name="Miyazawa D."/>
            <person name="Wong W."/>
            <person name="Lillquist A.L."/>
            <person name="Wang D."/>
            <person name="Dosanjh M."/>
            <person name="Hara H."/>
            <person name="Petrescu A."/>
            <person name="Morin R.D."/>
            <person name="Yang G."/>
            <person name="Stott J.M."/>
            <person name="Schein J.E."/>
            <person name="Shin H."/>
            <person name="Smailus D."/>
            <person name="Siddiqui A.S."/>
            <person name="Marra M.A."/>
            <person name="Jones S.J.M."/>
            <person name="Holt R."/>
            <person name="Brinkman F.S.L."/>
            <person name="Miyauchi K."/>
            <person name="Fukuda M."/>
            <person name="Davies J.E."/>
            <person name="Mohn W.W."/>
            <person name="Eltis L.D."/>
        </authorList>
    </citation>
    <scope>NUCLEOTIDE SEQUENCE [LARGE SCALE GENOMIC DNA]</scope>
    <source>
        <strain>RHA1</strain>
    </source>
</reference>
<keyword id="KW-0012">Acyltransferase</keyword>
<keyword id="KW-0133">Cell shape</keyword>
<keyword id="KW-0961">Cell wall biogenesis/degradation</keyword>
<keyword id="KW-0963">Cytoplasm</keyword>
<keyword id="KW-0460">Magnesium</keyword>
<keyword id="KW-0479">Metal-binding</keyword>
<keyword id="KW-0511">Multifunctional enzyme</keyword>
<keyword id="KW-0548">Nucleotidyltransferase</keyword>
<keyword id="KW-0573">Peptidoglycan synthesis</keyword>
<keyword id="KW-0677">Repeat</keyword>
<keyword id="KW-0808">Transferase</keyword>
<sequence length="500" mass="51807">MPVQTAVVVLAAGAGTRMRSKTPKVLHTLGGRTMLAHSLYAAAEVDPTHLVTVVGHDKERVGVAVSALEAELGRPIAIAVQDEQNGTGHAVECGLSALPADFRGTVLVTAADVPLLDGRTLHALVDEHHSEPTPSAVTVLTFTAPEPRGYGRIVRLPHDGEIAEIVEEADATEEQAAITEVNAGVYAFDAEFLRSALGQLNANNAQGELYLTDVVKIAREAGAPVFAAHLADSAKVAGANDRVQLSRLAAELNRRTVENWMRAGVTVVDPSTTWIDVGVTLARDVTIHPGVQLLGTTAVGEDAVIGPDTTLTDVTVGEGASVVRTHGSESTIGAGATVGPFSYLRPGTVLGASGKLGAFVETKNADIGAHTKVPHLTYVGDATIGEYSNIGASSVFVNYDGVAKSRTVVGSHVRTGSDTMFVAPVQVGDGAYTGAGTVLRFDVPPGALAVSGGKQRNIDGWVQRNRPGTAAAEAAAAAGLHHSSDLHETEKQDLKDGIEQ</sequence>